<feature type="chain" id="PRO_0000209760" description="DegV domain-containing protein CPE2509">
    <location>
        <begin position="1"/>
        <end position="281"/>
    </location>
</feature>
<feature type="domain" description="DegV" evidence="3">
    <location>
        <begin position="4"/>
        <end position="279"/>
    </location>
</feature>
<feature type="binding site" evidence="2">
    <location>
        <position position="60"/>
    </location>
    <ligand>
        <name>hexadecanoate</name>
        <dbReference type="ChEBI" id="CHEBI:7896"/>
    </ligand>
</feature>
<feature type="binding site" evidence="2">
    <location>
        <position position="93"/>
    </location>
    <ligand>
        <name>hexadecanoate</name>
        <dbReference type="ChEBI" id="CHEBI:7896"/>
    </ligand>
</feature>
<proteinExistence type="inferred from homology"/>
<name>Y2509_CLOPE</name>
<reference key="1">
    <citation type="journal article" date="2002" name="Proc. Natl. Acad. Sci. U.S.A.">
        <title>Complete genome sequence of Clostridium perfringens, an anaerobic flesh-eater.</title>
        <authorList>
            <person name="Shimizu T."/>
            <person name="Ohtani K."/>
            <person name="Hirakawa H."/>
            <person name="Ohshima K."/>
            <person name="Yamashita A."/>
            <person name="Shiba T."/>
            <person name="Ogasawara N."/>
            <person name="Hattori M."/>
            <person name="Kuhara S."/>
            <person name="Hayashi H."/>
        </authorList>
    </citation>
    <scope>NUCLEOTIDE SEQUENCE [LARGE SCALE GENOMIC DNA]</scope>
    <source>
        <strain>13 / Type A</strain>
    </source>
</reference>
<evidence type="ECO:0000250" key="1"/>
<evidence type="ECO:0000250" key="2">
    <source>
        <dbReference type="UniProtKB" id="Q9X1H9"/>
    </source>
</evidence>
<evidence type="ECO:0000255" key="3">
    <source>
        <dbReference type="PROSITE-ProRule" id="PRU00815"/>
    </source>
</evidence>
<dbReference type="EMBL" id="BA000016">
    <property type="protein sequence ID" value="BAB82215.1"/>
    <property type="molecule type" value="Genomic_DNA"/>
</dbReference>
<dbReference type="RefSeq" id="WP_011010939.1">
    <property type="nucleotide sequence ID" value="NC_003366.1"/>
</dbReference>
<dbReference type="SMR" id="Q8XHH5"/>
<dbReference type="STRING" id="195102.gene:10491843"/>
<dbReference type="KEGG" id="cpe:CPE2509"/>
<dbReference type="HOGENOM" id="CLU_048251_4_3_9"/>
<dbReference type="Proteomes" id="UP000000818">
    <property type="component" value="Chromosome"/>
</dbReference>
<dbReference type="GO" id="GO:0008289">
    <property type="term" value="F:lipid binding"/>
    <property type="evidence" value="ECO:0007669"/>
    <property type="project" value="UniProtKB-KW"/>
</dbReference>
<dbReference type="Gene3D" id="3.30.1180.10">
    <property type="match status" value="1"/>
</dbReference>
<dbReference type="Gene3D" id="3.40.50.10170">
    <property type="match status" value="1"/>
</dbReference>
<dbReference type="InterPro" id="IPR003797">
    <property type="entry name" value="DegV"/>
</dbReference>
<dbReference type="InterPro" id="IPR043168">
    <property type="entry name" value="DegV_C"/>
</dbReference>
<dbReference type="InterPro" id="IPR050270">
    <property type="entry name" value="DegV_domain_contain"/>
</dbReference>
<dbReference type="NCBIfam" id="TIGR00762">
    <property type="entry name" value="DegV"/>
    <property type="match status" value="1"/>
</dbReference>
<dbReference type="PANTHER" id="PTHR33434">
    <property type="entry name" value="DEGV DOMAIN-CONTAINING PROTEIN DR_1986-RELATED"/>
    <property type="match status" value="1"/>
</dbReference>
<dbReference type="PANTHER" id="PTHR33434:SF3">
    <property type="entry name" value="DEGV DOMAIN-CONTAINING PROTEIN YITS"/>
    <property type="match status" value="1"/>
</dbReference>
<dbReference type="Pfam" id="PF02645">
    <property type="entry name" value="DegV"/>
    <property type="match status" value="1"/>
</dbReference>
<dbReference type="SUPFAM" id="SSF82549">
    <property type="entry name" value="DAK1/DegV-like"/>
    <property type="match status" value="1"/>
</dbReference>
<dbReference type="PROSITE" id="PS51482">
    <property type="entry name" value="DEGV"/>
    <property type="match status" value="1"/>
</dbReference>
<organism>
    <name type="scientific">Clostridium perfringens (strain 13 / Type A)</name>
    <dbReference type="NCBI Taxonomy" id="195102"/>
    <lineage>
        <taxon>Bacteria</taxon>
        <taxon>Bacillati</taxon>
        <taxon>Bacillota</taxon>
        <taxon>Clostridia</taxon>
        <taxon>Eubacteriales</taxon>
        <taxon>Clostridiaceae</taxon>
        <taxon>Clostridium</taxon>
    </lineage>
</organism>
<accession>Q8XHH5</accession>
<sequence length="281" mass="30980">MQKIAIITDSSCDLTIDEIKDYNLNILPLKIIYKDREYNDIFDIKPIDVYENLHNEVPTTSLCSPDYINSVLDKLEAEGYTHLIGIFISSSLSGTFNAARLVIEERSSFKYYLFDSKIIGYPLGSIVIKAAEFVKEGKSFEEIIEALSIIREATTGFYTLNTLEYLRRGGRIGKVAGTVGDLLHLKPIISVDEHGAYTTIAKARGRKQSLKKLASIILEHLDEGKCNVAILNGMAEEEANQVLDSISSHPNLLKSQVRAIGAAMGVHAGPGMVGVSIQKEI</sequence>
<comment type="function">
    <text evidence="1">May bind long-chain fatty acids, such as palmitate, and may play a role in lipid transport or fatty acid metabolism.</text>
</comment>
<keyword id="KW-0446">Lipid-binding</keyword>
<keyword id="KW-1185">Reference proteome</keyword>
<protein>
    <recommendedName>
        <fullName>DegV domain-containing protein CPE2509</fullName>
    </recommendedName>
</protein>
<gene>
    <name type="ordered locus">CPE2509</name>
</gene>